<accession>A2S997</accession>
<protein>
    <recommendedName>
        <fullName evidence="1">Urease subunit beta</fullName>
        <ecNumber evidence="1">3.5.1.5</ecNumber>
    </recommendedName>
    <alternativeName>
        <fullName evidence="1">Urea amidohydrolase subunit beta</fullName>
    </alternativeName>
</protein>
<organism>
    <name type="scientific">Burkholderia mallei (strain NCTC 10229)</name>
    <dbReference type="NCBI Taxonomy" id="412022"/>
    <lineage>
        <taxon>Bacteria</taxon>
        <taxon>Pseudomonadati</taxon>
        <taxon>Pseudomonadota</taxon>
        <taxon>Betaproteobacteria</taxon>
        <taxon>Burkholderiales</taxon>
        <taxon>Burkholderiaceae</taxon>
        <taxon>Burkholderia</taxon>
        <taxon>pseudomallei group</taxon>
    </lineage>
</organism>
<dbReference type="EC" id="3.5.1.5" evidence="1"/>
<dbReference type="EMBL" id="CP000546">
    <property type="protein sequence ID" value="ABN02037.1"/>
    <property type="molecule type" value="Genomic_DNA"/>
</dbReference>
<dbReference type="RefSeq" id="WP_004186466.1">
    <property type="nucleotide sequence ID" value="NC_008836.1"/>
</dbReference>
<dbReference type="SMR" id="A2S997"/>
<dbReference type="KEGG" id="bml:BMA10229_A2558"/>
<dbReference type="HOGENOM" id="CLU_129707_1_1_4"/>
<dbReference type="UniPathway" id="UPA00258">
    <property type="reaction ID" value="UER00370"/>
</dbReference>
<dbReference type="Proteomes" id="UP000002283">
    <property type="component" value="Chromosome I"/>
</dbReference>
<dbReference type="GO" id="GO:0035550">
    <property type="term" value="C:urease complex"/>
    <property type="evidence" value="ECO:0007669"/>
    <property type="project" value="InterPro"/>
</dbReference>
<dbReference type="GO" id="GO:0009039">
    <property type="term" value="F:urease activity"/>
    <property type="evidence" value="ECO:0007669"/>
    <property type="project" value="UniProtKB-UniRule"/>
</dbReference>
<dbReference type="GO" id="GO:0043419">
    <property type="term" value="P:urea catabolic process"/>
    <property type="evidence" value="ECO:0007669"/>
    <property type="project" value="UniProtKB-UniRule"/>
</dbReference>
<dbReference type="CDD" id="cd00407">
    <property type="entry name" value="Urease_beta"/>
    <property type="match status" value="1"/>
</dbReference>
<dbReference type="FunFam" id="2.10.150.10:FF:000001">
    <property type="entry name" value="Urease subunit beta"/>
    <property type="match status" value="1"/>
</dbReference>
<dbReference type="Gene3D" id="2.10.150.10">
    <property type="entry name" value="Urease, beta subunit"/>
    <property type="match status" value="1"/>
</dbReference>
<dbReference type="HAMAP" id="MF_01954">
    <property type="entry name" value="Urease_beta"/>
    <property type="match status" value="1"/>
</dbReference>
<dbReference type="InterPro" id="IPR002019">
    <property type="entry name" value="Urease_beta-like"/>
</dbReference>
<dbReference type="InterPro" id="IPR036461">
    <property type="entry name" value="Urease_betasu_sf"/>
</dbReference>
<dbReference type="InterPro" id="IPR050069">
    <property type="entry name" value="Urease_subunit"/>
</dbReference>
<dbReference type="NCBIfam" id="NF009682">
    <property type="entry name" value="PRK13203.1"/>
    <property type="match status" value="1"/>
</dbReference>
<dbReference type="NCBIfam" id="TIGR00192">
    <property type="entry name" value="urease_beta"/>
    <property type="match status" value="1"/>
</dbReference>
<dbReference type="PANTHER" id="PTHR33569">
    <property type="entry name" value="UREASE"/>
    <property type="match status" value="1"/>
</dbReference>
<dbReference type="PANTHER" id="PTHR33569:SF1">
    <property type="entry name" value="UREASE"/>
    <property type="match status" value="1"/>
</dbReference>
<dbReference type="Pfam" id="PF00699">
    <property type="entry name" value="Urease_beta"/>
    <property type="match status" value="1"/>
</dbReference>
<dbReference type="SUPFAM" id="SSF51278">
    <property type="entry name" value="Urease, beta-subunit"/>
    <property type="match status" value="1"/>
</dbReference>
<sequence>MIPGELVIDDGEHTLNAGRHTIALVVANTGDRPVQVGSHYHFHEVNDALSFDRAAARGFRLNIAAGTAVRFEPGQTRTVELVELGGARAVYGFQGKVMGPL</sequence>
<feature type="chain" id="PRO_1000070723" description="Urease subunit beta">
    <location>
        <begin position="1"/>
        <end position="101"/>
    </location>
</feature>
<reference key="1">
    <citation type="journal article" date="2010" name="Genome Biol. Evol.">
        <title>Continuing evolution of Burkholderia mallei through genome reduction and large-scale rearrangements.</title>
        <authorList>
            <person name="Losada L."/>
            <person name="Ronning C.M."/>
            <person name="DeShazer D."/>
            <person name="Woods D."/>
            <person name="Fedorova N."/>
            <person name="Kim H.S."/>
            <person name="Shabalina S.A."/>
            <person name="Pearson T.R."/>
            <person name="Brinkac L."/>
            <person name="Tan P."/>
            <person name="Nandi T."/>
            <person name="Crabtree J."/>
            <person name="Badger J."/>
            <person name="Beckstrom-Sternberg S."/>
            <person name="Saqib M."/>
            <person name="Schutzer S.E."/>
            <person name="Keim P."/>
            <person name="Nierman W.C."/>
        </authorList>
    </citation>
    <scope>NUCLEOTIDE SEQUENCE [LARGE SCALE GENOMIC DNA]</scope>
    <source>
        <strain>NCTC 10229</strain>
    </source>
</reference>
<comment type="catalytic activity">
    <reaction evidence="1">
        <text>urea + 2 H2O + H(+) = hydrogencarbonate + 2 NH4(+)</text>
        <dbReference type="Rhea" id="RHEA:20557"/>
        <dbReference type="ChEBI" id="CHEBI:15377"/>
        <dbReference type="ChEBI" id="CHEBI:15378"/>
        <dbReference type="ChEBI" id="CHEBI:16199"/>
        <dbReference type="ChEBI" id="CHEBI:17544"/>
        <dbReference type="ChEBI" id="CHEBI:28938"/>
        <dbReference type="EC" id="3.5.1.5"/>
    </reaction>
</comment>
<comment type="pathway">
    <text evidence="1">Nitrogen metabolism; urea degradation; CO(2) and NH(3) from urea (urease route): step 1/1.</text>
</comment>
<comment type="subunit">
    <text evidence="1">Heterotrimer of UreA (gamma), UreB (beta) and UreC (alpha) subunits. Three heterotrimers associate to form the active enzyme.</text>
</comment>
<comment type="subcellular location">
    <subcellularLocation>
        <location evidence="1">Cytoplasm</location>
    </subcellularLocation>
</comment>
<comment type="similarity">
    <text evidence="1">Belongs to the urease beta subunit family.</text>
</comment>
<gene>
    <name evidence="1" type="primary">ureB</name>
    <name type="ordered locus">BMA10229_A2558</name>
</gene>
<proteinExistence type="inferred from homology"/>
<evidence type="ECO:0000255" key="1">
    <source>
        <dbReference type="HAMAP-Rule" id="MF_01954"/>
    </source>
</evidence>
<keyword id="KW-0963">Cytoplasm</keyword>
<keyword id="KW-0378">Hydrolase</keyword>
<name>URE2_BURM9</name>